<organism>
    <name type="scientific">Streptococcus suis (strain 05ZYH33)</name>
    <dbReference type="NCBI Taxonomy" id="391295"/>
    <lineage>
        <taxon>Bacteria</taxon>
        <taxon>Bacillati</taxon>
        <taxon>Bacillota</taxon>
        <taxon>Bacilli</taxon>
        <taxon>Lactobacillales</taxon>
        <taxon>Streptococcaceae</taxon>
        <taxon>Streptococcus</taxon>
    </lineage>
</organism>
<protein>
    <recommendedName>
        <fullName evidence="1">Ribosomal RNA small subunit methyltransferase H</fullName>
        <ecNumber evidence="1">2.1.1.199</ecNumber>
    </recommendedName>
    <alternativeName>
        <fullName evidence="1">16S rRNA m(4)C1402 methyltransferase</fullName>
    </alternativeName>
    <alternativeName>
        <fullName evidence="1">rRNA (cytosine-N(4)-)-methyltransferase RsmH</fullName>
    </alternativeName>
</protein>
<name>RSMH_STRSY</name>
<gene>
    <name evidence="1" type="primary">rsmH</name>
    <name type="synonym">mraW</name>
    <name type="ordered locus">SSU05_1744</name>
</gene>
<sequence length="316" mass="35731">MTKEFNHTTVLLHETVDMLDIKPNGIYVDATLGGAGHSEYLLSQLTDGGHLYAFDQDQTAIDHAHIRLASYIEKGQVTFIRDNFRNLKTRLAELGVTEIDGICYDLGVSSPQLDERERGFSYKQDAPLDMRMNREGHLTAYDVVNNYDYHDLVRIFFKYGEDKFSKQIARKIEQARAVKPIETTTELAELIKSAKPAKELKKKGHPAKQIFQAIRIEVNDELGAADESIQQAIDLLALDGRISVITFHSLEDRLTKQLFKEASTIDVPKGLPFIPDDLKAPLELVNRKPILPSQEELEANNRAHSAKLRVAKKVHK</sequence>
<dbReference type="EC" id="2.1.1.199" evidence="1"/>
<dbReference type="EMBL" id="CP000407">
    <property type="protein sequence ID" value="ABP90710.1"/>
    <property type="status" value="ALT_INIT"/>
    <property type="molecule type" value="Genomic_DNA"/>
</dbReference>
<dbReference type="SMR" id="A4VX71"/>
<dbReference type="STRING" id="391295.SSU05_1744"/>
<dbReference type="KEGG" id="ssu:SSU05_1744"/>
<dbReference type="eggNOG" id="COG0275">
    <property type="taxonomic scope" value="Bacteria"/>
</dbReference>
<dbReference type="HOGENOM" id="CLU_038422_2_0_9"/>
<dbReference type="GO" id="GO:0005737">
    <property type="term" value="C:cytoplasm"/>
    <property type="evidence" value="ECO:0007669"/>
    <property type="project" value="UniProtKB-SubCell"/>
</dbReference>
<dbReference type="GO" id="GO:0071424">
    <property type="term" value="F:rRNA (cytosine-N4-)-methyltransferase activity"/>
    <property type="evidence" value="ECO:0007669"/>
    <property type="project" value="UniProtKB-UniRule"/>
</dbReference>
<dbReference type="GO" id="GO:0070475">
    <property type="term" value="P:rRNA base methylation"/>
    <property type="evidence" value="ECO:0007669"/>
    <property type="project" value="UniProtKB-UniRule"/>
</dbReference>
<dbReference type="FunFam" id="1.10.150.170:FF:000001">
    <property type="entry name" value="Ribosomal RNA small subunit methyltransferase H"/>
    <property type="match status" value="1"/>
</dbReference>
<dbReference type="Gene3D" id="1.10.150.170">
    <property type="entry name" value="Putative methyltransferase TM0872, insert domain"/>
    <property type="match status" value="1"/>
</dbReference>
<dbReference type="Gene3D" id="3.40.50.150">
    <property type="entry name" value="Vaccinia Virus protein VP39"/>
    <property type="match status" value="1"/>
</dbReference>
<dbReference type="HAMAP" id="MF_01007">
    <property type="entry name" value="16SrRNA_methyltr_H"/>
    <property type="match status" value="1"/>
</dbReference>
<dbReference type="InterPro" id="IPR002903">
    <property type="entry name" value="RsmH"/>
</dbReference>
<dbReference type="InterPro" id="IPR023397">
    <property type="entry name" value="SAM-dep_MeTrfase_MraW_recog"/>
</dbReference>
<dbReference type="InterPro" id="IPR029063">
    <property type="entry name" value="SAM-dependent_MTases_sf"/>
</dbReference>
<dbReference type="NCBIfam" id="TIGR00006">
    <property type="entry name" value="16S rRNA (cytosine(1402)-N(4))-methyltransferase RsmH"/>
    <property type="match status" value="1"/>
</dbReference>
<dbReference type="PANTHER" id="PTHR11265:SF0">
    <property type="entry name" value="12S RRNA N4-METHYLCYTIDINE METHYLTRANSFERASE"/>
    <property type="match status" value="1"/>
</dbReference>
<dbReference type="PANTHER" id="PTHR11265">
    <property type="entry name" value="S-ADENOSYL-METHYLTRANSFERASE MRAW"/>
    <property type="match status" value="1"/>
</dbReference>
<dbReference type="Pfam" id="PF01795">
    <property type="entry name" value="Methyltransf_5"/>
    <property type="match status" value="1"/>
</dbReference>
<dbReference type="PIRSF" id="PIRSF004486">
    <property type="entry name" value="MraW"/>
    <property type="match status" value="1"/>
</dbReference>
<dbReference type="SUPFAM" id="SSF81799">
    <property type="entry name" value="Putative methyltransferase TM0872, insert domain"/>
    <property type="match status" value="1"/>
</dbReference>
<dbReference type="SUPFAM" id="SSF53335">
    <property type="entry name" value="S-adenosyl-L-methionine-dependent methyltransferases"/>
    <property type="match status" value="1"/>
</dbReference>
<evidence type="ECO:0000255" key="1">
    <source>
        <dbReference type="HAMAP-Rule" id="MF_01007"/>
    </source>
</evidence>
<evidence type="ECO:0000305" key="2"/>
<comment type="function">
    <text evidence="1">Specifically methylates the N4 position of cytidine in position 1402 (C1402) of 16S rRNA.</text>
</comment>
<comment type="catalytic activity">
    <reaction evidence="1">
        <text>cytidine(1402) in 16S rRNA + S-adenosyl-L-methionine = N(4)-methylcytidine(1402) in 16S rRNA + S-adenosyl-L-homocysteine + H(+)</text>
        <dbReference type="Rhea" id="RHEA:42928"/>
        <dbReference type="Rhea" id="RHEA-COMP:10286"/>
        <dbReference type="Rhea" id="RHEA-COMP:10287"/>
        <dbReference type="ChEBI" id="CHEBI:15378"/>
        <dbReference type="ChEBI" id="CHEBI:57856"/>
        <dbReference type="ChEBI" id="CHEBI:59789"/>
        <dbReference type="ChEBI" id="CHEBI:74506"/>
        <dbReference type="ChEBI" id="CHEBI:82748"/>
        <dbReference type="EC" id="2.1.1.199"/>
    </reaction>
</comment>
<comment type="subcellular location">
    <subcellularLocation>
        <location evidence="1">Cytoplasm</location>
    </subcellularLocation>
</comment>
<comment type="similarity">
    <text evidence="1">Belongs to the methyltransferase superfamily. RsmH family.</text>
</comment>
<comment type="sequence caution" evidence="2">
    <conflict type="erroneous initiation">
        <sequence resource="EMBL-CDS" id="ABP90710"/>
    </conflict>
</comment>
<accession>A4VX71</accession>
<keyword id="KW-0963">Cytoplasm</keyword>
<keyword id="KW-0489">Methyltransferase</keyword>
<keyword id="KW-0698">rRNA processing</keyword>
<keyword id="KW-0949">S-adenosyl-L-methionine</keyword>
<keyword id="KW-0808">Transferase</keyword>
<feature type="chain" id="PRO_0000387165" description="Ribosomal RNA small subunit methyltransferase H">
    <location>
        <begin position="1"/>
        <end position="316"/>
    </location>
</feature>
<feature type="binding site" evidence="1">
    <location>
        <begin position="35"/>
        <end position="37"/>
    </location>
    <ligand>
        <name>S-adenosyl-L-methionine</name>
        <dbReference type="ChEBI" id="CHEBI:59789"/>
    </ligand>
</feature>
<feature type="binding site" evidence="1">
    <location>
        <position position="55"/>
    </location>
    <ligand>
        <name>S-adenosyl-L-methionine</name>
        <dbReference type="ChEBI" id="CHEBI:59789"/>
    </ligand>
</feature>
<feature type="binding site" evidence="1">
    <location>
        <position position="84"/>
    </location>
    <ligand>
        <name>S-adenosyl-L-methionine</name>
        <dbReference type="ChEBI" id="CHEBI:59789"/>
    </ligand>
</feature>
<feature type="binding site" evidence="1">
    <location>
        <position position="105"/>
    </location>
    <ligand>
        <name>S-adenosyl-L-methionine</name>
        <dbReference type="ChEBI" id="CHEBI:59789"/>
    </ligand>
</feature>
<feature type="binding site" evidence="1">
    <location>
        <position position="112"/>
    </location>
    <ligand>
        <name>S-adenosyl-L-methionine</name>
        <dbReference type="ChEBI" id="CHEBI:59789"/>
    </ligand>
</feature>
<proteinExistence type="inferred from homology"/>
<reference key="1">
    <citation type="journal article" date="2007" name="PLoS ONE">
        <title>A glimpse of streptococcal toxic shock syndrome from comparative genomics of S. suis 2 Chinese isolates.</title>
        <authorList>
            <person name="Chen C."/>
            <person name="Tang J."/>
            <person name="Dong W."/>
            <person name="Wang C."/>
            <person name="Feng Y."/>
            <person name="Wang J."/>
            <person name="Zheng F."/>
            <person name="Pan X."/>
            <person name="Liu D."/>
            <person name="Li M."/>
            <person name="Song Y."/>
            <person name="Zhu X."/>
            <person name="Sun H."/>
            <person name="Feng T."/>
            <person name="Guo Z."/>
            <person name="Ju A."/>
            <person name="Ge J."/>
            <person name="Dong Y."/>
            <person name="Sun W."/>
            <person name="Jiang Y."/>
            <person name="Wang J."/>
            <person name="Yan J."/>
            <person name="Yang H."/>
            <person name="Wang X."/>
            <person name="Gao G.F."/>
            <person name="Yang R."/>
            <person name="Wang J."/>
            <person name="Yu J."/>
        </authorList>
    </citation>
    <scope>NUCLEOTIDE SEQUENCE [LARGE SCALE GENOMIC DNA]</scope>
    <source>
        <strain>05ZYH33</strain>
    </source>
</reference>